<protein>
    <recommendedName>
        <fullName evidence="1">RNA pyrophosphohydrolase</fullName>
        <ecNumber evidence="1">3.6.1.-</ecNumber>
    </recommendedName>
    <alternativeName>
        <fullName evidence="1">(Di)nucleoside polyphosphate hydrolase</fullName>
    </alternativeName>
</protein>
<comment type="function">
    <text evidence="1">Accelerates the degradation of transcripts by removing pyrophosphate from the 5'-end of triphosphorylated RNA, leading to a more labile monophosphorylated state that can stimulate subsequent ribonuclease cleavage.</text>
</comment>
<comment type="cofactor">
    <cofactor evidence="1">
        <name>a divalent metal cation</name>
        <dbReference type="ChEBI" id="CHEBI:60240"/>
    </cofactor>
</comment>
<comment type="similarity">
    <text evidence="1">Belongs to the Nudix hydrolase family. RppH subfamily.</text>
</comment>
<feature type="chain" id="PRO_0000057034" description="RNA pyrophosphohydrolase">
    <location>
        <begin position="1"/>
        <end position="162"/>
    </location>
</feature>
<feature type="domain" description="Nudix hydrolase" evidence="1">
    <location>
        <begin position="7"/>
        <end position="149"/>
    </location>
</feature>
<feature type="short sequence motif" description="Nudix box">
    <location>
        <begin position="40"/>
        <end position="61"/>
    </location>
</feature>
<keyword id="KW-0378">Hydrolase</keyword>
<dbReference type="EC" id="3.6.1.-" evidence="1"/>
<dbReference type="EMBL" id="AE017196">
    <property type="protein sequence ID" value="AAS14772.1"/>
    <property type="molecule type" value="Genomic_DNA"/>
</dbReference>
<dbReference type="RefSeq" id="WP_010963050.1">
    <property type="nucleotide sequence ID" value="NZ_OX384529.1"/>
</dbReference>
<dbReference type="SMR" id="P61787"/>
<dbReference type="EnsemblBacteria" id="AAS14772">
    <property type="protein sequence ID" value="AAS14772"/>
    <property type="gene ID" value="WD_1119"/>
</dbReference>
<dbReference type="KEGG" id="wol:WD_1119"/>
<dbReference type="eggNOG" id="COG0494">
    <property type="taxonomic scope" value="Bacteria"/>
</dbReference>
<dbReference type="Proteomes" id="UP000008215">
    <property type="component" value="Chromosome"/>
</dbReference>
<dbReference type="GO" id="GO:0034432">
    <property type="term" value="F:bis(5'-adenosyl)-pentaphosphatase activity"/>
    <property type="evidence" value="ECO:0007669"/>
    <property type="project" value="TreeGrafter"/>
</dbReference>
<dbReference type="GO" id="GO:0008893">
    <property type="term" value="F:guanosine-3',5'-bis(diphosphate) 3'-diphosphatase activity"/>
    <property type="evidence" value="ECO:0007669"/>
    <property type="project" value="TreeGrafter"/>
</dbReference>
<dbReference type="GO" id="GO:0006753">
    <property type="term" value="P:nucleoside phosphate metabolic process"/>
    <property type="evidence" value="ECO:0007669"/>
    <property type="project" value="TreeGrafter"/>
</dbReference>
<dbReference type="GO" id="GO:0019693">
    <property type="term" value="P:ribose phosphate metabolic process"/>
    <property type="evidence" value="ECO:0007669"/>
    <property type="project" value="TreeGrafter"/>
</dbReference>
<dbReference type="CDD" id="cd03671">
    <property type="entry name" value="NUDIX_Ap4A_hydrolase_plant_like"/>
    <property type="match status" value="1"/>
</dbReference>
<dbReference type="Gene3D" id="3.90.79.10">
    <property type="entry name" value="Nucleoside Triphosphate Pyrophosphohydrolase"/>
    <property type="match status" value="1"/>
</dbReference>
<dbReference type="HAMAP" id="MF_00298">
    <property type="entry name" value="Nudix_RppH"/>
    <property type="match status" value="1"/>
</dbReference>
<dbReference type="InterPro" id="IPR020476">
    <property type="entry name" value="Nudix_hydrolase"/>
</dbReference>
<dbReference type="InterPro" id="IPR015797">
    <property type="entry name" value="NUDIX_hydrolase-like_dom_sf"/>
</dbReference>
<dbReference type="InterPro" id="IPR020084">
    <property type="entry name" value="NUDIX_hydrolase_CS"/>
</dbReference>
<dbReference type="InterPro" id="IPR000086">
    <property type="entry name" value="NUDIX_hydrolase_dom"/>
</dbReference>
<dbReference type="InterPro" id="IPR022927">
    <property type="entry name" value="RppH"/>
</dbReference>
<dbReference type="NCBIfam" id="NF001936">
    <property type="entry name" value="PRK00714.1-3"/>
    <property type="match status" value="1"/>
</dbReference>
<dbReference type="NCBIfam" id="NF001937">
    <property type="entry name" value="PRK00714.1-4"/>
    <property type="match status" value="1"/>
</dbReference>
<dbReference type="NCBIfam" id="NF001938">
    <property type="entry name" value="PRK00714.1-5"/>
    <property type="match status" value="1"/>
</dbReference>
<dbReference type="PANTHER" id="PTHR11839:SF22">
    <property type="entry name" value="NUDIX HYDROLASE 26, CHLOROPLASTIC"/>
    <property type="match status" value="1"/>
</dbReference>
<dbReference type="PANTHER" id="PTHR11839">
    <property type="entry name" value="UDP/ADP-SUGAR PYROPHOSPHATASE"/>
    <property type="match status" value="1"/>
</dbReference>
<dbReference type="Pfam" id="PF00293">
    <property type="entry name" value="NUDIX"/>
    <property type="match status" value="1"/>
</dbReference>
<dbReference type="PRINTS" id="PR00502">
    <property type="entry name" value="NUDIXFAMILY"/>
</dbReference>
<dbReference type="SUPFAM" id="SSF55811">
    <property type="entry name" value="Nudix"/>
    <property type="match status" value="1"/>
</dbReference>
<dbReference type="PROSITE" id="PS51462">
    <property type="entry name" value="NUDIX"/>
    <property type="match status" value="1"/>
</dbReference>
<dbReference type="PROSITE" id="PS00893">
    <property type="entry name" value="NUDIX_BOX"/>
    <property type="match status" value="1"/>
</dbReference>
<proteinExistence type="inferred from homology"/>
<sequence length="162" mass="18877">MVEQKDKYRPCVGIMLFNRQGHAFIGKRFESDSYWQMPQGGVDDGEELEQAALRELLEEVGTNKVKVITKSKDWIYYNLPEEVIPICWNGKYSGQKQRWFLMKFCGEDEDIDINYTGHPEFKEWRWQGIDSLVASAISFKKEVYKTVIEEFSSIIKASTISS</sequence>
<evidence type="ECO:0000255" key="1">
    <source>
        <dbReference type="HAMAP-Rule" id="MF_00298"/>
    </source>
</evidence>
<organism>
    <name type="scientific">Wolbachia pipientis wMel</name>
    <dbReference type="NCBI Taxonomy" id="163164"/>
    <lineage>
        <taxon>Bacteria</taxon>
        <taxon>Pseudomonadati</taxon>
        <taxon>Pseudomonadota</taxon>
        <taxon>Alphaproteobacteria</taxon>
        <taxon>Rickettsiales</taxon>
        <taxon>Anaplasmataceae</taxon>
        <taxon>Wolbachieae</taxon>
        <taxon>Wolbachia</taxon>
    </lineage>
</organism>
<name>RPPH_WOLPM</name>
<gene>
    <name evidence="1" type="primary">rppH</name>
    <name evidence="1" type="synonym">nudH</name>
    <name type="ordered locus">WD_1119</name>
</gene>
<accession>P61787</accession>
<reference key="1">
    <citation type="journal article" date="2004" name="PLoS Biol.">
        <title>Phylogenomics of the reproductive parasite Wolbachia pipientis wMel: a streamlined genome overrun by mobile genetic elements.</title>
        <authorList>
            <person name="Wu M."/>
            <person name="Sun L.V."/>
            <person name="Vamathevan J.J."/>
            <person name="Riegler M."/>
            <person name="DeBoy R.T."/>
            <person name="Brownlie J.C."/>
            <person name="McGraw E.A."/>
            <person name="Martin W."/>
            <person name="Esser C."/>
            <person name="Ahmadinejad N."/>
            <person name="Wiegand C."/>
            <person name="Madupu R."/>
            <person name="Beanan M.J."/>
            <person name="Brinkac L.M."/>
            <person name="Daugherty S.C."/>
            <person name="Durkin A.S."/>
            <person name="Kolonay J.F."/>
            <person name="Nelson W.C."/>
            <person name="Mohamoud Y."/>
            <person name="Lee P."/>
            <person name="Berry K.J."/>
            <person name="Young M.B."/>
            <person name="Utterback T.R."/>
            <person name="Weidman J.F."/>
            <person name="Nierman W.C."/>
            <person name="Paulsen I.T."/>
            <person name="Nelson K.E."/>
            <person name="Tettelin H."/>
            <person name="O'Neill S.L."/>
            <person name="Eisen J.A."/>
        </authorList>
    </citation>
    <scope>NUCLEOTIDE SEQUENCE [LARGE SCALE GENOMIC DNA]</scope>
</reference>